<keyword id="KW-0004">4Fe-4S</keyword>
<keyword id="KW-0408">Iron</keyword>
<keyword id="KW-0411">Iron-sulfur</keyword>
<keyword id="KW-0456">Lyase</keyword>
<keyword id="KW-0479">Metal-binding</keyword>
<keyword id="KW-1185">Reference proteome</keyword>
<keyword id="KW-0949">S-adenosyl-L-methionine</keyword>
<keyword id="KW-0784">Thiamine biosynthesis</keyword>
<keyword id="KW-0862">Zinc</keyword>
<accession>A9BD54</accession>
<comment type="function">
    <text evidence="1">Catalyzes the synthesis of the hydroxymethylpyrimidine phosphate (HMP-P) moiety of thiamine from aminoimidazole ribotide (AIR) in a radical S-adenosyl-L-methionine (SAM)-dependent reaction.</text>
</comment>
<comment type="catalytic activity">
    <reaction evidence="1">
        <text>5-amino-1-(5-phospho-beta-D-ribosyl)imidazole + S-adenosyl-L-methionine = 4-amino-2-methyl-5-(phosphooxymethyl)pyrimidine + CO + 5'-deoxyadenosine + formate + L-methionine + 3 H(+)</text>
        <dbReference type="Rhea" id="RHEA:24840"/>
        <dbReference type="ChEBI" id="CHEBI:15378"/>
        <dbReference type="ChEBI" id="CHEBI:15740"/>
        <dbReference type="ChEBI" id="CHEBI:17245"/>
        <dbReference type="ChEBI" id="CHEBI:17319"/>
        <dbReference type="ChEBI" id="CHEBI:57844"/>
        <dbReference type="ChEBI" id="CHEBI:58354"/>
        <dbReference type="ChEBI" id="CHEBI:59789"/>
        <dbReference type="ChEBI" id="CHEBI:137981"/>
        <dbReference type="EC" id="4.1.99.17"/>
    </reaction>
</comment>
<comment type="cofactor">
    <cofactor evidence="1">
        <name>[4Fe-4S] cluster</name>
        <dbReference type="ChEBI" id="CHEBI:49883"/>
    </cofactor>
    <text evidence="1">Binds 1 [4Fe-4S] cluster per subunit. The cluster is coordinated with 3 cysteines and an exchangeable S-adenosyl-L-methionine.</text>
</comment>
<comment type="pathway">
    <text evidence="1">Cofactor biosynthesis; thiamine diphosphate biosynthesis.</text>
</comment>
<comment type="similarity">
    <text evidence="1">Belongs to the ThiC family.</text>
</comment>
<sequence>MRASWVANRQGKSNVSQLHFARQGMITEEMAYVANRENLPESLVMEEVARGRMIIPANINHLNLEPMAIGIASKCKVNANIGASPNASDVGEELKKLELAVKYGADTVMDLSTGGVNLDEVRTAIINASPVPIGTVPVYQALESVHGSIEKLSEEDFLHIIEKHCQQGVDYQTIHAGLLIEHLPKVKGRLTGIVSRGGGILAQWMLYHHKQNPLFSRFDDICEIFKRYDCSFSLGDSLRPGCLHDASDEAQLAELKTLGQLTKRAWAHDIQVMVEGPGHVPMDQIEFNVRKQMEDCSEAPFYVLGPLVTDIAPGYDHITSAIGAAMAGWYGTAMLCYVTPKEHLGLPNPEDVREGLIAYKIAAHAADIARHRSGARDRDDELSKARYAFDWNKQFELSLDPERARQYHDETLPADIYKQAEFCSMCGPKHCPMQTKITDKDLDDLEDVIKSKDASKINL</sequence>
<dbReference type="EC" id="4.1.99.17" evidence="1"/>
<dbReference type="EMBL" id="CP000878">
    <property type="protein sequence ID" value="ABX09667.1"/>
    <property type="molecule type" value="Genomic_DNA"/>
</dbReference>
<dbReference type="RefSeq" id="WP_012196287.1">
    <property type="nucleotide sequence ID" value="NC_009976.1"/>
</dbReference>
<dbReference type="SMR" id="A9BD54"/>
<dbReference type="STRING" id="93059.P9211_17361"/>
<dbReference type="KEGG" id="pmj:P9211_17361"/>
<dbReference type="eggNOG" id="COG0422">
    <property type="taxonomic scope" value="Bacteria"/>
</dbReference>
<dbReference type="HOGENOM" id="CLU_013181_2_1_3"/>
<dbReference type="OrthoDB" id="9805897at2"/>
<dbReference type="UniPathway" id="UPA00060"/>
<dbReference type="Proteomes" id="UP000000788">
    <property type="component" value="Chromosome"/>
</dbReference>
<dbReference type="GO" id="GO:0005829">
    <property type="term" value="C:cytosol"/>
    <property type="evidence" value="ECO:0007669"/>
    <property type="project" value="TreeGrafter"/>
</dbReference>
<dbReference type="GO" id="GO:0051539">
    <property type="term" value="F:4 iron, 4 sulfur cluster binding"/>
    <property type="evidence" value="ECO:0007669"/>
    <property type="project" value="UniProtKB-KW"/>
</dbReference>
<dbReference type="GO" id="GO:0016830">
    <property type="term" value="F:carbon-carbon lyase activity"/>
    <property type="evidence" value="ECO:0007669"/>
    <property type="project" value="InterPro"/>
</dbReference>
<dbReference type="GO" id="GO:0008270">
    <property type="term" value="F:zinc ion binding"/>
    <property type="evidence" value="ECO:0007669"/>
    <property type="project" value="UniProtKB-UniRule"/>
</dbReference>
<dbReference type="GO" id="GO:0009228">
    <property type="term" value="P:thiamine biosynthetic process"/>
    <property type="evidence" value="ECO:0007669"/>
    <property type="project" value="UniProtKB-KW"/>
</dbReference>
<dbReference type="GO" id="GO:0009229">
    <property type="term" value="P:thiamine diphosphate biosynthetic process"/>
    <property type="evidence" value="ECO:0007669"/>
    <property type="project" value="UniProtKB-UniRule"/>
</dbReference>
<dbReference type="FunFam" id="3.20.20.540:FF:000001">
    <property type="entry name" value="Phosphomethylpyrimidine synthase"/>
    <property type="match status" value="1"/>
</dbReference>
<dbReference type="Gene3D" id="6.10.250.620">
    <property type="match status" value="1"/>
</dbReference>
<dbReference type="Gene3D" id="3.20.20.540">
    <property type="entry name" value="Radical SAM ThiC family, central domain"/>
    <property type="match status" value="1"/>
</dbReference>
<dbReference type="HAMAP" id="MF_00089">
    <property type="entry name" value="ThiC"/>
    <property type="match status" value="1"/>
</dbReference>
<dbReference type="InterPro" id="IPR037509">
    <property type="entry name" value="ThiC"/>
</dbReference>
<dbReference type="InterPro" id="IPR038521">
    <property type="entry name" value="ThiC/Bza_core_dom"/>
</dbReference>
<dbReference type="InterPro" id="IPR002817">
    <property type="entry name" value="ThiC/BzaA/B"/>
</dbReference>
<dbReference type="NCBIfam" id="NF006763">
    <property type="entry name" value="PRK09284.1"/>
    <property type="match status" value="1"/>
</dbReference>
<dbReference type="NCBIfam" id="NF009895">
    <property type="entry name" value="PRK13352.1"/>
    <property type="match status" value="1"/>
</dbReference>
<dbReference type="NCBIfam" id="TIGR00190">
    <property type="entry name" value="thiC"/>
    <property type="match status" value="1"/>
</dbReference>
<dbReference type="PANTHER" id="PTHR30557:SF1">
    <property type="entry name" value="PHOSPHOMETHYLPYRIMIDINE SYNTHASE, CHLOROPLASTIC"/>
    <property type="match status" value="1"/>
</dbReference>
<dbReference type="PANTHER" id="PTHR30557">
    <property type="entry name" value="THIAMINE BIOSYNTHESIS PROTEIN THIC"/>
    <property type="match status" value="1"/>
</dbReference>
<dbReference type="Pfam" id="PF01964">
    <property type="entry name" value="ThiC_Rad_SAM"/>
    <property type="match status" value="1"/>
</dbReference>
<dbReference type="SFLD" id="SFLDF00407">
    <property type="entry name" value="phosphomethylpyrimidine_syntha"/>
    <property type="match status" value="1"/>
</dbReference>
<dbReference type="SFLD" id="SFLDG01114">
    <property type="entry name" value="phosphomethylpyrimidine_syntha"/>
    <property type="match status" value="1"/>
</dbReference>
<dbReference type="SFLD" id="SFLDS00113">
    <property type="entry name" value="Radical_SAM_Phosphomethylpyrim"/>
    <property type="match status" value="1"/>
</dbReference>
<evidence type="ECO:0000255" key="1">
    <source>
        <dbReference type="HAMAP-Rule" id="MF_00089"/>
    </source>
</evidence>
<protein>
    <recommendedName>
        <fullName evidence="1">Phosphomethylpyrimidine synthase</fullName>
        <ecNumber evidence="1">4.1.99.17</ecNumber>
    </recommendedName>
    <alternativeName>
        <fullName evidence="1">Hydroxymethylpyrimidine phosphate synthase</fullName>
        <shortName evidence="1">HMP-P synthase</shortName>
        <shortName evidence="1">HMP-phosphate synthase</shortName>
        <shortName evidence="1">HMPP synthase</shortName>
    </alternativeName>
    <alternativeName>
        <fullName evidence="1">Thiamine biosynthesis protein ThiC</fullName>
    </alternativeName>
</protein>
<gene>
    <name evidence="1" type="primary">thiC</name>
    <name type="ordered locus">P9211_17361</name>
</gene>
<proteinExistence type="inferred from homology"/>
<name>THIC_PROM4</name>
<reference key="1">
    <citation type="journal article" date="2007" name="PLoS Genet.">
        <title>Patterns and implications of gene gain and loss in the evolution of Prochlorococcus.</title>
        <authorList>
            <person name="Kettler G.C."/>
            <person name="Martiny A.C."/>
            <person name="Huang K."/>
            <person name="Zucker J."/>
            <person name="Coleman M.L."/>
            <person name="Rodrigue S."/>
            <person name="Chen F."/>
            <person name="Lapidus A."/>
            <person name="Ferriera S."/>
            <person name="Johnson J."/>
            <person name="Steglich C."/>
            <person name="Church G.M."/>
            <person name="Richardson P."/>
            <person name="Chisholm S.W."/>
        </authorList>
    </citation>
    <scope>NUCLEOTIDE SEQUENCE [LARGE SCALE GENOMIC DNA]</scope>
    <source>
        <strain>MIT 9211</strain>
    </source>
</reference>
<feature type="chain" id="PRO_1000093224" description="Phosphomethylpyrimidine synthase">
    <location>
        <begin position="1"/>
        <end position="459"/>
    </location>
</feature>
<feature type="binding site" evidence="1">
    <location>
        <position position="80"/>
    </location>
    <ligand>
        <name>substrate</name>
    </ligand>
</feature>
<feature type="binding site" evidence="1">
    <location>
        <position position="109"/>
    </location>
    <ligand>
        <name>substrate</name>
    </ligand>
</feature>
<feature type="binding site" evidence="1">
    <location>
        <position position="139"/>
    </location>
    <ligand>
        <name>substrate</name>
    </ligand>
</feature>
<feature type="binding site" evidence="1">
    <location>
        <position position="175"/>
    </location>
    <ligand>
        <name>substrate</name>
    </ligand>
</feature>
<feature type="binding site" evidence="1">
    <location>
        <begin position="195"/>
        <end position="197"/>
    </location>
    <ligand>
        <name>substrate</name>
    </ligand>
</feature>
<feature type="binding site" evidence="1">
    <location>
        <begin position="236"/>
        <end position="239"/>
    </location>
    <ligand>
        <name>substrate</name>
    </ligand>
</feature>
<feature type="binding site" evidence="1">
    <location>
        <position position="275"/>
    </location>
    <ligand>
        <name>substrate</name>
    </ligand>
</feature>
<feature type="binding site" evidence="1">
    <location>
        <position position="279"/>
    </location>
    <ligand>
        <name>Zn(2+)</name>
        <dbReference type="ChEBI" id="CHEBI:29105"/>
    </ligand>
</feature>
<feature type="binding site" evidence="1">
    <location>
        <position position="302"/>
    </location>
    <ligand>
        <name>substrate</name>
    </ligand>
</feature>
<feature type="binding site" evidence="1">
    <location>
        <position position="343"/>
    </location>
    <ligand>
        <name>Zn(2+)</name>
        <dbReference type="ChEBI" id="CHEBI:29105"/>
    </ligand>
</feature>
<feature type="binding site" evidence="1">
    <location>
        <position position="423"/>
    </location>
    <ligand>
        <name>[4Fe-4S] cluster</name>
        <dbReference type="ChEBI" id="CHEBI:49883"/>
        <note>4Fe-4S-S-AdoMet</note>
    </ligand>
</feature>
<feature type="binding site" evidence="1">
    <location>
        <position position="426"/>
    </location>
    <ligand>
        <name>[4Fe-4S] cluster</name>
        <dbReference type="ChEBI" id="CHEBI:49883"/>
        <note>4Fe-4S-S-AdoMet</note>
    </ligand>
</feature>
<feature type="binding site" evidence="1">
    <location>
        <position position="431"/>
    </location>
    <ligand>
        <name>[4Fe-4S] cluster</name>
        <dbReference type="ChEBI" id="CHEBI:49883"/>
        <note>4Fe-4S-S-AdoMet</note>
    </ligand>
</feature>
<organism>
    <name type="scientific">Prochlorococcus marinus (strain MIT 9211)</name>
    <dbReference type="NCBI Taxonomy" id="93059"/>
    <lineage>
        <taxon>Bacteria</taxon>
        <taxon>Bacillati</taxon>
        <taxon>Cyanobacteriota</taxon>
        <taxon>Cyanophyceae</taxon>
        <taxon>Synechococcales</taxon>
        <taxon>Prochlorococcaceae</taxon>
        <taxon>Prochlorococcus</taxon>
    </lineage>
</organism>